<reference key="1">
    <citation type="journal article" date="1997" name="Plant Syst. Evol.">
        <title>Phylogenetic analysis of Iridaceae with parsimony and distance methods using the plastid gene rps4.</title>
        <authorList>
            <person name="Souza-Chies T.T."/>
            <person name="Bittar G."/>
            <person name="Nadot S."/>
            <person name="Carter L."/>
            <person name="Besin E."/>
            <person name="Lejeune B.P."/>
        </authorList>
    </citation>
    <scope>NUCLEOTIDE SEQUENCE [GENOMIC DNA]</scope>
</reference>
<sequence length="194" mass="22540">RFKKIRRLGTLPGLTSKRPRSGSDLKNPLRSVKRSQYRIRLEEKQKLRFHYGLTERQLLRYVHIAGKAKGSTGQVLLQLLEMRLDNILFRLGMASTIPGARQLVTHRHILVNGRIVDIPSYRCKPRDIITTKDKQRSKALIQNYIASSPHEELPNHLTIDSFQYKGLVNQIIDSKWIGLKINELLVVEYYSRQT</sequence>
<keyword id="KW-0150">Chloroplast</keyword>
<keyword id="KW-0934">Plastid</keyword>
<keyword id="KW-0687">Ribonucleoprotein</keyword>
<keyword id="KW-0689">Ribosomal protein</keyword>
<keyword id="KW-0694">RNA-binding</keyword>
<keyword id="KW-0699">rRNA-binding</keyword>
<dbReference type="EMBL" id="Z68267">
    <property type="protein sequence ID" value="CAA92564.1"/>
    <property type="molecule type" value="Genomic_DNA"/>
</dbReference>
<dbReference type="SMR" id="O20213"/>
<dbReference type="GO" id="GO:0009507">
    <property type="term" value="C:chloroplast"/>
    <property type="evidence" value="ECO:0007669"/>
    <property type="project" value="UniProtKB-SubCell"/>
</dbReference>
<dbReference type="GO" id="GO:0015935">
    <property type="term" value="C:small ribosomal subunit"/>
    <property type="evidence" value="ECO:0007669"/>
    <property type="project" value="InterPro"/>
</dbReference>
<dbReference type="GO" id="GO:0019843">
    <property type="term" value="F:rRNA binding"/>
    <property type="evidence" value="ECO:0007669"/>
    <property type="project" value="UniProtKB-KW"/>
</dbReference>
<dbReference type="GO" id="GO:0003735">
    <property type="term" value="F:structural constituent of ribosome"/>
    <property type="evidence" value="ECO:0007669"/>
    <property type="project" value="InterPro"/>
</dbReference>
<dbReference type="GO" id="GO:0042274">
    <property type="term" value="P:ribosomal small subunit biogenesis"/>
    <property type="evidence" value="ECO:0007669"/>
    <property type="project" value="TreeGrafter"/>
</dbReference>
<dbReference type="GO" id="GO:0006412">
    <property type="term" value="P:translation"/>
    <property type="evidence" value="ECO:0007669"/>
    <property type="project" value="InterPro"/>
</dbReference>
<dbReference type="CDD" id="cd00165">
    <property type="entry name" value="S4"/>
    <property type="match status" value="1"/>
</dbReference>
<dbReference type="FunFam" id="1.10.1050.10:FF:000002">
    <property type="entry name" value="30S ribosomal protein S4, chloroplastic"/>
    <property type="match status" value="1"/>
</dbReference>
<dbReference type="FunFam" id="3.10.290.10:FF:000081">
    <property type="entry name" value="30S ribosomal protein S4, chloroplastic"/>
    <property type="match status" value="1"/>
</dbReference>
<dbReference type="Gene3D" id="1.10.1050.10">
    <property type="entry name" value="Ribosomal Protein S4 Delta 41, Chain A, domain 1"/>
    <property type="match status" value="1"/>
</dbReference>
<dbReference type="Gene3D" id="3.10.290.10">
    <property type="entry name" value="RNA-binding S4 domain"/>
    <property type="match status" value="1"/>
</dbReference>
<dbReference type="HAMAP" id="MF_01306_B">
    <property type="entry name" value="Ribosomal_uS4_B"/>
    <property type="match status" value="1"/>
</dbReference>
<dbReference type="InterPro" id="IPR022801">
    <property type="entry name" value="Ribosomal_uS4"/>
</dbReference>
<dbReference type="InterPro" id="IPR005709">
    <property type="entry name" value="Ribosomal_uS4_bac-type"/>
</dbReference>
<dbReference type="InterPro" id="IPR018079">
    <property type="entry name" value="Ribosomal_uS4_CS"/>
</dbReference>
<dbReference type="InterPro" id="IPR001912">
    <property type="entry name" value="Ribosomal_uS4_N"/>
</dbReference>
<dbReference type="InterPro" id="IPR002942">
    <property type="entry name" value="S4_RNA-bd"/>
</dbReference>
<dbReference type="InterPro" id="IPR036986">
    <property type="entry name" value="S4_RNA-bd_sf"/>
</dbReference>
<dbReference type="NCBIfam" id="NF003717">
    <property type="entry name" value="PRK05327.1"/>
    <property type="match status" value="1"/>
</dbReference>
<dbReference type="NCBIfam" id="TIGR01017">
    <property type="entry name" value="rpsD_bact"/>
    <property type="match status" value="1"/>
</dbReference>
<dbReference type="PANTHER" id="PTHR11831">
    <property type="entry name" value="30S 40S RIBOSOMAL PROTEIN"/>
    <property type="match status" value="1"/>
</dbReference>
<dbReference type="PANTHER" id="PTHR11831:SF4">
    <property type="entry name" value="SMALL RIBOSOMAL SUBUNIT PROTEIN US4M"/>
    <property type="match status" value="1"/>
</dbReference>
<dbReference type="Pfam" id="PF00163">
    <property type="entry name" value="Ribosomal_S4"/>
    <property type="match status" value="1"/>
</dbReference>
<dbReference type="Pfam" id="PF01479">
    <property type="entry name" value="S4"/>
    <property type="match status" value="1"/>
</dbReference>
<dbReference type="SMART" id="SM01390">
    <property type="entry name" value="Ribosomal_S4"/>
    <property type="match status" value="1"/>
</dbReference>
<dbReference type="SMART" id="SM00363">
    <property type="entry name" value="S4"/>
    <property type="match status" value="1"/>
</dbReference>
<dbReference type="SUPFAM" id="SSF55174">
    <property type="entry name" value="Alpha-L RNA-binding motif"/>
    <property type="match status" value="1"/>
</dbReference>
<dbReference type="PROSITE" id="PS00632">
    <property type="entry name" value="RIBOSOMAL_S4"/>
    <property type="match status" value="1"/>
</dbReference>
<dbReference type="PROSITE" id="PS50889">
    <property type="entry name" value="S4"/>
    <property type="match status" value="1"/>
</dbReference>
<protein>
    <recommendedName>
        <fullName evidence="3">Small ribosomal subunit protein uS4c</fullName>
    </recommendedName>
    <alternativeName>
        <fullName>30S ribosomal protein S4, chloroplastic</fullName>
    </alternativeName>
</protein>
<proteinExistence type="inferred from homology"/>
<comment type="function">
    <text evidence="1">One of the primary rRNA binding proteins, it binds directly to 16S rRNA where it nucleates assembly of the body of the 30S subunit.</text>
</comment>
<comment type="function">
    <text evidence="1">With S5 and S12 plays an important role in translational accuracy.</text>
</comment>
<comment type="subunit">
    <text evidence="1">Part of the 30S ribosomal subunit. Contacts protein S5. The interaction surface between S4 and S5 is involved in control of translational fidelity (By similarity).</text>
</comment>
<comment type="subcellular location">
    <subcellularLocation>
        <location>Plastid</location>
        <location>Chloroplast</location>
    </subcellularLocation>
</comment>
<comment type="similarity">
    <text evidence="3">Belongs to the universal ribosomal protein uS4 family.</text>
</comment>
<feature type="chain" id="PRO_0000132592" description="Small ribosomal subunit protein uS4c">
    <location>
        <begin position="1" status="less than"/>
        <end position="194" status="greater than"/>
    </location>
</feature>
<feature type="domain" description="S4 RNA-binding">
    <location>
        <begin position="82"/>
        <end position="143"/>
    </location>
</feature>
<feature type="region of interest" description="Disordered" evidence="2">
    <location>
        <begin position="1"/>
        <end position="29"/>
    </location>
</feature>
<feature type="non-terminal residue">
    <location>
        <position position="1"/>
    </location>
</feature>
<feature type="non-terminal residue">
    <location>
        <position position="194"/>
    </location>
</feature>
<accession>O20213</accession>
<organism>
    <name type="scientific">Furcraea foetida</name>
    <name type="common">Mauritius hemp</name>
    <name type="synonym">Furcraea gigantea</name>
    <dbReference type="NCBI Taxonomy" id="1824555"/>
    <lineage>
        <taxon>Eukaryota</taxon>
        <taxon>Viridiplantae</taxon>
        <taxon>Streptophyta</taxon>
        <taxon>Embryophyta</taxon>
        <taxon>Tracheophyta</taxon>
        <taxon>Spermatophyta</taxon>
        <taxon>Magnoliopsida</taxon>
        <taxon>Liliopsida</taxon>
        <taxon>Asparagales</taxon>
        <taxon>Asparagaceae</taxon>
        <taxon>Agavoideae</taxon>
        <taxon>Furcraea</taxon>
    </lineage>
</organism>
<name>RR4_FURFO</name>
<geneLocation type="chloroplast"/>
<gene>
    <name type="primary">rps4</name>
</gene>
<evidence type="ECO:0000250" key="1"/>
<evidence type="ECO:0000256" key="2">
    <source>
        <dbReference type="SAM" id="MobiDB-lite"/>
    </source>
</evidence>
<evidence type="ECO:0000305" key="3"/>